<organism>
    <name type="scientific">Francisella novicida</name>
    <dbReference type="NCBI Taxonomy" id="264"/>
    <lineage>
        <taxon>Bacteria</taxon>
        <taxon>Pseudomonadati</taxon>
        <taxon>Pseudomonadota</taxon>
        <taxon>Gammaproteobacteria</taxon>
        <taxon>Thiotrichales</taxon>
        <taxon>Francisellaceae</taxon>
        <taxon>Francisella</taxon>
    </lineage>
</organism>
<gene>
    <name evidence="1" type="primary">mdh</name>
</gene>
<reference key="1">
    <citation type="submission" date="2002-05" db="EMBL/GenBank/DDBJ databases">
        <title>Francisella tularensis housekeeping gene sequencing.</title>
        <authorList>
            <person name="Lindler L.E."/>
            <person name="Liu Y."/>
            <person name="Chu M."/>
        </authorList>
    </citation>
    <scope>NUCLEOTIDE SEQUENCE [GENOMIC DNA]</scope>
    <source>
        <strain>GA99-3549</strain>
    </source>
</reference>
<dbReference type="EC" id="1.1.1.37" evidence="1"/>
<dbReference type="EMBL" id="AF513321">
    <property type="protein sequence ID" value="AAN37809.1"/>
    <property type="molecule type" value="Genomic_DNA"/>
</dbReference>
<dbReference type="RefSeq" id="WP_003039393.1">
    <property type="nucleotide sequence ID" value="NZ_JACVMD010000022.1"/>
</dbReference>
<dbReference type="SMR" id="Q8GNM0"/>
<dbReference type="STRING" id="676032.FN3523_1085"/>
<dbReference type="PATRIC" id="fig|264.22.peg.1004"/>
<dbReference type="GO" id="GO:0004459">
    <property type="term" value="F:L-lactate dehydrogenase activity"/>
    <property type="evidence" value="ECO:0007669"/>
    <property type="project" value="TreeGrafter"/>
</dbReference>
<dbReference type="GO" id="GO:0030060">
    <property type="term" value="F:L-malate dehydrogenase (NAD+) activity"/>
    <property type="evidence" value="ECO:0007669"/>
    <property type="project" value="UniProtKB-UniRule"/>
</dbReference>
<dbReference type="GO" id="GO:0006089">
    <property type="term" value="P:lactate metabolic process"/>
    <property type="evidence" value="ECO:0007669"/>
    <property type="project" value="TreeGrafter"/>
</dbReference>
<dbReference type="GO" id="GO:0006099">
    <property type="term" value="P:tricarboxylic acid cycle"/>
    <property type="evidence" value="ECO:0007669"/>
    <property type="project" value="UniProtKB-UniRule"/>
</dbReference>
<dbReference type="CDD" id="cd01339">
    <property type="entry name" value="LDH-like_MDH"/>
    <property type="match status" value="1"/>
</dbReference>
<dbReference type="FunFam" id="3.40.50.720:FF:000018">
    <property type="entry name" value="Malate dehydrogenase"/>
    <property type="match status" value="1"/>
</dbReference>
<dbReference type="FunFam" id="3.90.110.10:FF:000004">
    <property type="entry name" value="Malate dehydrogenase"/>
    <property type="match status" value="1"/>
</dbReference>
<dbReference type="Gene3D" id="3.90.110.10">
    <property type="entry name" value="Lactate dehydrogenase/glycoside hydrolase, family 4, C-terminal"/>
    <property type="match status" value="1"/>
</dbReference>
<dbReference type="Gene3D" id="3.40.50.720">
    <property type="entry name" value="NAD(P)-binding Rossmann-like Domain"/>
    <property type="match status" value="1"/>
</dbReference>
<dbReference type="HAMAP" id="MF_00487">
    <property type="entry name" value="Malate_dehydrog_3"/>
    <property type="match status" value="1"/>
</dbReference>
<dbReference type="InterPro" id="IPR001557">
    <property type="entry name" value="L-lactate/malate_DH"/>
</dbReference>
<dbReference type="InterPro" id="IPR022383">
    <property type="entry name" value="Lactate/malate_DH_C"/>
</dbReference>
<dbReference type="InterPro" id="IPR001236">
    <property type="entry name" value="Lactate/malate_DH_N"/>
</dbReference>
<dbReference type="InterPro" id="IPR015955">
    <property type="entry name" value="Lactate_DH/Glyco_Ohase_4_C"/>
</dbReference>
<dbReference type="InterPro" id="IPR011275">
    <property type="entry name" value="Malate_DH_type3"/>
</dbReference>
<dbReference type="InterPro" id="IPR036291">
    <property type="entry name" value="NAD(P)-bd_dom_sf"/>
</dbReference>
<dbReference type="NCBIfam" id="TIGR01763">
    <property type="entry name" value="MalateDH_bact"/>
    <property type="match status" value="1"/>
</dbReference>
<dbReference type="NCBIfam" id="NF004863">
    <property type="entry name" value="PRK06223.1"/>
    <property type="match status" value="1"/>
</dbReference>
<dbReference type="PANTHER" id="PTHR43128">
    <property type="entry name" value="L-2-HYDROXYCARBOXYLATE DEHYDROGENASE (NAD(P)(+))"/>
    <property type="match status" value="1"/>
</dbReference>
<dbReference type="PANTHER" id="PTHR43128:SF16">
    <property type="entry name" value="L-LACTATE DEHYDROGENASE"/>
    <property type="match status" value="1"/>
</dbReference>
<dbReference type="Pfam" id="PF02866">
    <property type="entry name" value="Ldh_1_C"/>
    <property type="match status" value="1"/>
</dbReference>
<dbReference type="Pfam" id="PF00056">
    <property type="entry name" value="Ldh_1_N"/>
    <property type="match status" value="1"/>
</dbReference>
<dbReference type="PIRSF" id="PIRSF000102">
    <property type="entry name" value="Lac_mal_DH"/>
    <property type="match status" value="1"/>
</dbReference>
<dbReference type="PRINTS" id="PR00086">
    <property type="entry name" value="LLDHDRGNASE"/>
</dbReference>
<dbReference type="SUPFAM" id="SSF56327">
    <property type="entry name" value="LDH C-terminal domain-like"/>
    <property type="match status" value="1"/>
</dbReference>
<dbReference type="SUPFAM" id="SSF51735">
    <property type="entry name" value="NAD(P)-binding Rossmann-fold domains"/>
    <property type="match status" value="1"/>
</dbReference>
<feature type="chain" id="PRO_0000113451" description="Malate dehydrogenase">
    <location>
        <begin position="1"/>
        <end position="319"/>
    </location>
</feature>
<feature type="active site" description="Proton acceptor" evidence="1">
    <location>
        <position position="176"/>
    </location>
</feature>
<feature type="binding site" evidence="1">
    <location>
        <begin position="10"/>
        <end position="15"/>
    </location>
    <ligand>
        <name>NAD(+)</name>
        <dbReference type="ChEBI" id="CHEBI:57540"/>
    </ligand>
</feature>
<feature type="binding site" evidence="1">
    <location>
        <position position="34"/>
    </location>
    <ligand>
        <name>NAD(+)</name>
        <dbReference type="ChEBI" id="CHEBI:57540"/>
    </ligand>
</feature>
<feature type="binding site" evidence="1">
    <location>
        <position position="83"/>
    </location>
    <ligand>
        <name>substrate</name>
    </ligand>
</feature>
<feature type="binding site" evidence="1">
    <location>
        <position position="89"/>
    </location>
    <ligand>
        <name>substrate</name>
    </ligand>
</feature>
<feature type="binding site" evidence="1">
    <location>
        <position position="96"/>
    </location>
    <ligand>
        <name>NAD(+)</name>
        <dbReference type="ChEBI" id="CHEBI:57540"/>
    </ligand>
</feature>
<feature type="binding site" evidence="1">
    <location>
        <begin position="119"/>
        <end position="121"/>
    </location>
    <ligand>
        <name>NAD(+)</name>
        <dbReference type="ChEBI" id="CHEBI:57540"/>
    </ligand>
</feature>
<feature type="binding site" evidence="1">
    <location>
        <position position="121"/>
    </location>
    <ligand>
        <name>substrate</name>
    </ligand>
</feature>
<feature type="binding site" evidence="1">
    <location>
        <position position="152"/>
    </location>
    <ligand>
        <name>substrate</name>
    </ligand>
</feature>
<comment type="function">
    <text evidence="1">Catalyzes the reversible oxidation of malate to oxaloacetate.</text>
</comment>
<comment type="catalytic activity">
    <reaction evidence="1">
        <text>(S)-malate + NAD(+) = oxaloacetate + NADH + H(+)</text>
        <dbReference type="Rhea" id="RHEA:21432"/>
        <dbReference type="ChEBI" id="CHEBI:15378"/>
        <dbReference type="ChEBI" id="CHEBI:15589"/>
        <dbReference type="ChEBI" id="CHEBI:16452"/>
        <dbReference type="ChEBI" id="CHEBI:57540"/>
        <dbReference type="ChEBI" id="CHEBI:57945"/>
        <dbReference type="EC" id="1.1.1.37"/>
    </reaction>
</comment>
<comment type="similarity">
    <text evidence="1">Belongs to the LDH/MDH superfamily. MDH type 3 family.</text>
</comment>
<evidence type="ECO:0000255" key="1">
    <source>
        <dbReference type="HAMAP-Rule" id="MF_00487"/>
    </source>
</evidence>
<sequence>MARKKIALVGAGNIGGTLAHLALLKQLGDVVLFDIAQGMPNGKALDLLQTCPIEGVDFKVRGTNDYKDLENSDVVIVTAGVPRKPGMSRDDLLGINIKVMQTVGEGIKHNCPNAFVICITNPLDIMVNMLQKFSGVPDNKIVGMAGVLDSARFRTFLADELNVSVQQVQAYVMGGHGDTMVPLTKMSNVAGVSLEQLVKEGKLKQERLDAIVSRTRSGGGEIVALLKTGSAYYAPAAAGIQMAESFLKDKKMILPCAAKVKAGMYGLDEDLFVGVPTEISANGVRPIEVEISDKEREQLQVSINAVKDLNKAAAEILAK</sequence>
<proteinExistence type="inferred from homology"/>
<protein>
    <recommendedName>
        <fullName evidence="1">Malate dehydrogenase</fullName>
        <ecNumber evidence="1">1.1.1.37</ecNumber>
    </recommendedName>
</protein>
<keyword id="KW-0520">NAD</keyword>
<keyword id="KW-0560">Oxidoreductase</keyword>
<keyword id="KW-0816">Tricarboxylic acid cycle</keyword>
<name>MDH_FRANO</name>
<accession>Q8GNM0</accession>